<keyword id="KW-0010">Activator</keyword>
<keyword id="KW-0238">DNA-binding</keyword>
<keyword id="KW-0936">Ethylene signaling pathway</keyword>
<keyword id="KW-0539">Nucleus</keyword>
<keyword id="KW-1185">Reference proteome</keyword>
<keyword id="KW-0804">Transcription</keyword>
<keyword id="KW-0805">Transcription regulation</keyword>
<sequence>MADLFGGGHGGELMEALQPFYKSASTSASNPAFASSNDAFASAPNDLFSSSSYYNPHASLFPSHSTTSYPDIYSGSMTYPSSFGSDLQQPENYQSQFHYQNTITYTHQDNNTCMLNFIEPSQPGFMTQPGPSSGSVSKPAKLYRGVRQRHWGKWVAEIRLPRNRTRLWLGTFDTAEEAALAYDRAAFKLRGDSARLNFPALRYQTGSSPSDTGEYGPIQAAVDAKLEAILAEPKNQPGKTERTSRKRAKAAASSAEQPSAPQQHSGSGESDGSGSPTSDVMVQEMCQEPEMPWNENFMLGKCPSYEIDWASILS</sequence>
<accession>Q9SKW5</accession>
<reference key="1">
    <citation type="journal article" date="2000" name="Nature">
        <title>Sequence and analysis of chromosome 1 of the plant Arabidopsis thaliana.</title>
        <authorList>
            <person name="Theologis A."/>
            <person name="Ecker J.R."/>
            <person name="Palm C.J."/>
            <person name="Federspiel N.A."/>
            <person name="Kaul S."/>
            <person name="White O."/>
            <person name="Alonso J."/>
            <person name="Altafi H."/>
            <person name="Araujo R."/>
            <person name="Bowman C.L."/>
            <person name="Brooks S.Y."/>
            <person name="Buehler E."/>
            <person name="Chan A."/>
            <person name="Chao Q."/>
            <person name="Chen H."/>
            <person name="Cheuk R.F."/>
            <person name="Chin C.W."/>
            <person name="Chung M.K."/>
            <person name="Conn L."/>
            <person name="Conway A.B."/>
            <person name="Conway A.R."/>
            <person name="Creasy T.H."/>
            <person name="Dewar K."/>
            <person name="Dunn P."/>
            <person name="Etgu P."/>
            <person name="Feldblyum T.V."/>
            <person name="Feng J.-D."/>
            <person name="Fong B."/>
            <person name="Fujii C.Y."/>
            <person name="Gill J.E."/>
            <person name="Goldsmith A.D."/>
            <person name="Haas B."/>
            <person name="Hansen N.F."/>
            <person name="Hughes B."/>
            <person name="Huizar L."/>
            <person name="Hunter J.L."/>
            <person name="Jenkins J."/>
            <person name="Johnson-Hopson C."/>
            <person name="Khan S."/>
            <person name="Khaykin E."/>
            <person name="Kim C.J."/>
            <person name="Koo H.L."/>
            <person name="Kremenetskaia I."/>
            <person name="Kurtz D.B."/>
            <person name="Kwan A."/>
            <person name="Lam B."/>
            <person name="Langin-Hooper S."/>
            <person name="Lee A."/>
            <person name="Lee J.M."/>
            <person name="Lenz C.A."/>
            <person name="Li J.H."/>
            <person name="Li Y.-P."/>
            <person name="Lin X."/>
            <person name="Liu S.X."/>
            <person name="Liu Z.A."/>
            <person name="Luros J.S."/>
            <person name="Maiti R."/>
            <person name="Marziali A."/>
            <person name="Militscher J."/>
            <person name="Miranda M."/>
            <person name="Nguyen M."/>
            <person name="Nierman W.C."/>
            <person name="Osborne B.I."/>
            <person name="Pai G."/>
            <person name="Peterson J."/>
            <person name="Pham P.K."/>
            <person name="Rizzo M."/>
            <person name="Rooney T."/>
            <person name="Rowley D."/>
            <person name="Sakano H."/>
            <person name="Salzberg S.L."/>
            <person name="Schwartz J.R."/>
            <person name="Shinn P."/>
            <person name="Southwick A.M."/>
            <person name="Sun H."/>
            <person name="Tallon L.J."/>
            <person name="Tambunga G."/>
            <person name="Toriumi M.J."/>
            <person name="Town C.D."/>
            <person name="Utterback T."/>
            <person name="Van Aken S."/>
            <person name="Vaysberg M."/>
            <person name="Vysotskaia V.S."/>
            <person name="Walker M."/>
            <person name="Wu D."/>
            <person name="Yu G."/>
            <person name="Fraser C.M."/>
            <person name="Venter J.C."/>
            <person name="Davis R.W."/>
        </authorList>
    </citation>
    <scope>NUCLEOTIDE SEQUENCE [LARGE SCALE GENOMIC DNA]</scope>
    <source>
        <strain>cv. Columbia</strain>
    </source>
</reference>
<reference key="2">
    <citation type="journal article" date="2017" name="Plant J.">
        <title>Araport11: a complete reannotation of the Arabidopsis thaliana reference genome.</title>
        <authorList>
            <person name="Cheng C.Y."/>
            <person name="Krishnakumar V."/>
            <person name="Chan A.P."/>
            <person name="Thibaud-Nissen F."/>
            <person name="Schobel S."/>
            <person name="Town C.D."/>
        </authorList>
    </citation>
    <scope>GENOME REANNOTATION</scope>
    <source>
        <strain>cv. Columbia</strain>
    </source>
</reference>
<reference key="3">
    <citation type="journal article" date="2003" name="Science">
        <title>Empirical analysis of transcriptional activity in the Arabidopsis genome.</title>
        <authorList>
            <person name="Yamada K."/>
            <person name="Lim J."/>
            <person name="Dale J.M."/>
            <person name="Chen H."/>
            <person name="Shinn P."/>
            <person name="Palm C.J."/>
            <person name="Southwick A.M."/>
            <person name="Wu H.C."/>
            <person name="Kim C.J."/>
            <person name="Nguyen M."/>
            <person name="Pham P.K."/>
            <person name="Cheuk R.F."/>
            <person name="Karlin-Newmann G."/>
            <person name="Liu S.X."/>
            <person name="Lam B."/>
            <person name="Sakano H."/>
            <person name="Wu T."/>
            <person name="Yu G."/>
            <person name="Miranda M."/>
            <person name="Quach H.L."/>
            <person name="Tripp M."/>
            <person name="Chang C.H."/>
            <person name="Lee J.M."/>
            <person name="Toriumi M.J."/>
            <person name="Chan M.M."/>
            <person name="Tang C.C."/>
            <person name="Onodera C.S."/>
            <person name="Deng J.M."/>
            <person name="Akiyama K."/>
            <person name="Ansari Y."/>
            <person name="Arakawa T."/>
            <person name="Banh J."/>
            <person name="Banno F."/>
            <person name="Bowser L."/>
            <person name="Brooks S.Y."/>
            <person name="Carninci P."/>
            <person name="Chao Q."/>
            <person name="Choy N."/>
            <person name="Enju A."/>
            <person name="Goldsmith A.D."/>
            <person name="Gurjal M."/>
            <person name="Hansen N.F."/>
            <person name="Hayashizaki Y."/>
            <person name="Johnson-Hopson C."/>
            <person name="Hsuan V.W."/>
            <person name="Iida K."/>
            <person name="Karnes M."/>
            <person name="Khan S."/>
            <person name="Koesema E."/>
            <person name="Ishida J."/>
            <person name="Jiang P.X."/>
            <person name="Jones T."/>
            <person name="Kawai J."/>
            <person name="Kamiya A."/>
            <person name="Meyers C."/>
            <person name="Nakajima M."/>
            <person name="Narusaka M."/>
            <person name="Seki M."/>
            <person name="Sakurai T."/>
            <person name="Satou M."/>
            <person name="Tamse R."/>
            <person name="Vaysberg M."/>
            <person name="Wallender E.K."/>
            <person name="Wong C."/>
            <person name="Yamamura Y."/>
            <person name="Yuan S."/>
            <person name="Shinozaki K."/>
            <person name="Davis R.W."/>
            <person name="Theologis A."/>
            <person name="Ecker J.R."/>
        </authorList>
    </citation>
    <scope>NUCLEOTIDE SEQUENCE [LARGE SCALE MRNA]</scope>
    <source>
        <strain>cv. Columbia</strain>
    </source>
</reference>
<reference key="4">
    <citation type="submission" date="2006-07" db="EMBL/GenBank/DDBJ databases">
        <title>Large-scale analysis of RIKEN Arabidopsis full-length (RAFL) cDNAs.</title>
        <authorList>
            <person name="Totoki Y."/>
            <person name="Seki M."/>
            <person name="Ishida J."/>
            <person name="Nakajima M."/>
            <person name="Enju A."/>
            <person name="Kamiya A."/>
            <person name="Narusaka M."/>
            <person name="Shin-i T."/>
            <person name="Nakagawa M."/>
            <person name="Sakamoto N."/>
            <person name="Oishi K."/>
            <person name="Kohara Y."/>
            <person name="Kobayashi M."/>
            <person name="Toyoda A."/>
            <person name="Sakaki Y."/>
            <person name="Sakurai T."/>
            <person name="Iida K."/>
            <person name="Akiyama K."/>
            <person name="Satou M."/>
            <person name="Toyoda T."/>
            <person name="Konagaya A."/>
            <person name="Carninci P."/>
            <person name="Kawai J."/>
            <person name="Hayashizaki Y."/>
            <person name="Shinozaki K."/>
        </authorList>
    </citation>
    <scope>NUCLEOTIDE SEQUENCE [LARGE SCALE MRNA]</scope>
    <source>
        <strain>cv. Columbia</strain>
    </source>
</reference>
<reference key="5">
    <citation type="journal article" date="2006" name="Plant Physiol.">
        <title>Genome-wide analysis of the ERF gene family in Arabidopsis and rice.</title>
        <authorList>
            <person name="Nakano T."/>
            <person name="Suzuki K."/>
            <person name="Fujimura T."/>
            <person name="Shinshi H."/>
        </authorList>
    </citation>
    <scope>GENE FAMILY</scope>
    <scope>NOMENCLATURE</scope>
</reference>
<feature type="chain" id="PRO_0000290394" description="Ethylene-responsive transcription factor ERF055">
    <location>
        <begin position="1"/>
        <end position="314"/>
    </location>
</feature>
<feature type="DNA-binding region" description="AP2/ERF" evidence="2">
    <location>
        <begin position="142"/>
        <end position="199"/>
    </location>
</feature>
<feature type="region of interest" description="Disordered" evidence="3">
    <location>
        <begin position="231"/>
        <end position="288"/>
    </location>
</feature>
<feature type="compositionally biased region" description="Low complexity" evidence="3">
    <location>
        <begin position="250"/>
        <end position="278"/>
    </location>
</feature>
<proteinExistence type="evidence at transcript level"/>
<evidence type="ECO:0000250" key="1"/>
<evidence type="ECO:0000255" key="2">
    <source>
        <dbReference type="PROSITE-ProRule" id="PRU00366"/>
    </source>
</evidence>
<evidence type="ECO:0000256" key="3">
    <source>
        <dbReference type="SAM" id="MobiDB-lite"/>
    </source>
</evidence>
<evidence type="ECO:0000305" key="4"/>
<organism>
    <name type="scientific">Arabidopsis thaliana</name>
    <name type="common">Mouse-ear cress</name>
    <dbReference type="NCBI Taxonomy" id="3702"/>
    <lineage>
        <taxon>Eukaryota</taxon>
        <taxon>Viridiplantae</taxon>
        <taxon>Streptophyta</taxon>
        <taxon>Embryophyta</taxon>
        <taxon>Tracheophyta</taxon>
        <taxon>Spermatophyta</taxon>
        <taxon>Magnoliopsida</taxon>
        <taxon>eudicotyledons</taxon>
        <taxon>Gunneridae</taxon>
        <taxon>Pentapetalae</taxon>
        <taxon>rosids</taxon>
        <taxon>malvids</taxon>
        <taxon>Brassicales</taxon>
        <taxon>Brassicaceae</taxon>
        <taxon>Camelineae</taxon>
        <taxon>Arabidopsis</taxon>
    </lineage>
</organism>
<dbReference type="EMBL" id="AC006228">
    <property type="protein sequence ID" value="AAF18648.1"/>
    <property type="molecule type" value="Genomic_DNA"/>
</dbReference>
<dbReference type="EMBL" id="AC021666">
    <property type="protein sequence ID" value="AAG52316.1"/>
    <property type="molecule type" value="Genomic_DNA"/>
</dbReference>
<dbReference type="EMBL" id="CP002684">
    <property type="protein sequence ID" value="AEE31842.1"/>
    <property type="molecule type" value="Genomic_DNA"/>
</dbReference>
<dbReference type="EMBL" id="BT005758">
    <property type="protein sequence ID" value="AAO64163.1"/>
    <property type="molecule type" value="mRNA"/>
</dbReference>
<dbReference type="EMBL" id="BT006078">
    <property type="protein sequence ID" value="AAP04063.1"/>
    <property type="molecule type" value="mRNA"/>
</dbReference>
<dbReference type="EMBL" id="AK228415">
    <property type="protein sequence ID" value="BAF00349.1"/>
    <property type="molecule type" value="mRNA"/>
</dbReference>
<dbReference type="PIR" id="E86482">
    <property type="entry name" value="E86482"/>
</dbReference>
<dbReference type="RefSeq" id="NP_564468.1">
    <property type="nucleotide sequence ID" value="NM_103302.3"/>
</dbReference>
<dbReference type="SMR" id="Q9SKW5"/>
<dbReference type="BioGRID" id="25742">
    <property type="interactions" value="13"/>
</dbReference>
<dbReference type="IntAct" id="Q9SKW5">
    <property type="interactions" value="12"/>
</dbReference>
<dbReference type="STRING" id="3702.Q9SKW5"/>
<dbReference type="PaxDb" id="3702-AT1G36060.1"/>
<dbReference type="EnsemblPlants" id="AT1G36060.1">
    <property type="protein sequence ID" value="AT1G36060.1"/>
    <property type="gene ID" value="AT1G36060"/>
</dbReference>
<dbReference type="GeneID" id="840510"/>
<dbReference type="Gramene" id="AT1G36060.1">
    <property type="protein sequence ID" value="AT1G36060.1"/>
    <property type="gene ID" value="AT1G36060"/>
</dbReference>
<dbReference type="KEGG" id="ath:AT1G36060"/>
<dbReference type="Araport" id="AT1G36060"/>
<dbReference type="TAIR" id="AT1G36060">
    <property type="gene designation" value="TG"/>
</dbReference>
<dbReference type="eggNOG" id="ENOG502QQEY">
    <property type="taxonomic scope" value="Eukaryota"/>
</dbReference>
<dbReference type="HOGENOM" id="CLU_057028_1_0_1"/>
<dbReference type="InParanoid" id="Q9SKW5"/>
<dbReference type="OMA" id="PEMPWNE"/>
<dbReference type="PhylomeDB" id="Q9SKW5"/>
<dbReference type="PRO" id="PR:Q9SKW5"/>
<dbReference type="Proteomes" id="UP000006548">
    <property type="component" value="Chromosome 1"/>
</dbReference>
<dbReference type="ExpressionAtlas" id="Q9SKW5">
    <property type="expression patterns" value="baseline and differential"/>
</dbReference>
<dbReference type="GO" id="GO:0005634">
    <property type="term" value="C:nucleus"/>
    <property type="evidence" value="ECO:0000314"/>
    <property type="project" value="TAIR"/>
</dbReference>
<dbReference type="GO" id="GO:0003700">
    <property type="term" value="F:DNA-binding transcription factor activity"/>
    <property type="evidence" value="ECO:0000314"/>
    <property type="project" value="TAIR"/>
</dbReference>
<dbReference type="GO" id="GO:0000976">
    <property type="term" value="F:transcription cis-regulatory region binding"/>
    <property type="evidence" value="ECO:0000353"/>
    <property type="project" value="TAIR"/>
</dbReference>
<dbReference type="GO" id="GO:0009873">
    <property type="term" value="P:ethylene-activated signaling pathway"/>
    <property type="evidence" value="ECO:0007669"/>
    <property type="project" value="UniProtKB-KW"/>
</dbReference>
<dbReference type="GO" id="GO:0006355">
    <property type="term" value="P:regulation of DNA-templated transcription"/>
    <property type="evidence" value="ECO:0000270"/>
    <property type="project" value="TAIR"/>
</dbReference>
<dbReference type="GO" id="GO:0009415">
    <property type="term" value="P:response to water"/>
    <property type="evidence" value="ECO:0000315"/>
    <property type="project" value="TAIR"/>
</dbReference>
<dbReference type="CDD" id="cd00018">
    <property type="entry name" value="AP2"/>
    <property type="match status" value="1"/>
</dbReference>
<dbReference type="FunFam" id="3.30.730.10:FF:000001">
    <property type="entry name" value="Ethylene-responsive transcription factor 2"/>
    <property type="match status" value="1"/>
</dbReference>
<dbReference type="Gene3D" id="3.30.730.10">
    <property type="entry name" value="AP2/ERF domain"/>
    <property type="match status" value="1"/>
</dbReference>
<dbReference type="InterPro" id="IPR001471">
    <property type="entry name" value="AP2/ERF_dom"/>
</dbReference>
<dbReference type="InterPro" id="IPR036955">
    <property type="entry name" value="AP2/ERF_dom_sf"/>
</dbReference>
<dbReference type="InterPro" id="IPR016177">
    <property type="entry name" value="DNA-bd_dom_sf"/>
</dbReference>
<dbReference type="InterPro" id="IPR051758">
    <property type="entry name" value="ERF/AP2-like"/>
</dbReference>
<dbReference type="PANTHER" id="PTHR31657:SF33">
    <property type="entry name" value="ETHYLENE-RESPONSIVE TRANSCRIPTION FACTOR ERF055"/>
    <property type="match status" value="1"/>
</dbReference>
<dbReference type="PANTHER" id="PTHR31657">
    <property type="entry name" value="ETHYLENE-RESPONSIVE TRANSCRIPTION FACTOR ERF061"/>
    <property type="match status" value="1"/>
</dbReference>
<dbReference type="Pfam" id="PF00847">
    <property type="entry name" value="AP2"/>
    <property type="match status" value="1"/>
</dbReference>
<dbReference type="PRINTS" id="PR00367">
    <property type="entry name" value="ETHRSPELEMNT"/>
</dbReference>
<dbReference type="SMART" id="SM00380">
    <property type="entry name" value="AP2"/>
    <property type="match status" value="1"/>
</dbReference>
<dbReference type="SUPFAM" id="SSF54171">
    <property type="entry name" value="DNA-binding domain"/>
    <property type="match status" value="1"/>
</dbReference>
<dbReference type="PROSITE" id="PS51032">
    <property type="entry name" value="AP2_ERF"/>
    <property type="match status" value="1"/>
</dbReference>
<comment type="function">
    <text evidence="1">Probably acts as a transcriptional activator. Binds to the GCC-box pathogenesis-related promoter element. May be involved in the regulation of gene expression by stress factors and by components of stress signal transduction pathways (By similarity).</text>
</comment>
<comment type="subcellular location">
    <subcellularLocation>
        <location evidence="4">Nucleus</location>
    </subcellularLocation>
</comment>
<comment type="similarity">
    <text evidence="4">Belongs to the AP2/ERF transcription factor family. ERF subfamily.</text>
</comment>
<gene>
    <name type="primary">ERF055</name>
    <name type="ordered locus">At1g36060</name>
    <name type="ORF">F5J5.5</name>
    <name type="ORF">T22A15.2</name>
</gene>
<protein>
    <recommendedName>
        <fullName>Ethylene-responsive transcription factor ERF055</fullName>
    </recommendedName>
</protein>
<name>ERF55_ARATH</name>